<sequence>MANHDPISDMLTRIRNASEKRHQTTRVPASRMSRSIAKVLQQEGFISEISEEGEGVLTHLVLELKYSGKHRHPTIRSMQRVSKPGLRIYKNTRALPKVLGGLGMAIISTSKGVMSDRDARKQGVGGEVLCYVY</sequence>
<gene>
    <name evidence="1" type="primary">rpsH</name>
    <name evidence="1" type="synonym">rps8</name>
    <name type="ordered locus">P9303_23161</name>
</gene>
<name>RS8_PROM3</name>
<comment type="function">
    <text evidence="1">One of the primary rRNA binding proteins, it binds directly to 16S rRNA central domain where it helps coordinate assembly of the platform of the 30S subunit.</text>
</comment>
<comment type="subunit">
    <text evidence="1">Part of the 30S ribosomal subunit. Contacts proteins S5 and S12.</text>
</comment>
<comment type="similarity">
    <text evidence="1">Belongs to the universal ribosomal protein uS8 family.</text>
</comment>
<protein>
    <recommendedName>
        <fullName evidence="1">Small ribosomal subunit protein uS8</fullName>
    </recommendedName>
    <alternativeName>
        <fullName evidence="2">30S ribosomal protein S8</fullName>
    </alternativeName>
</protein>
<organism>
    <name type="scientific">Prochlorococcus marinus (strain MIT 9303)</name>
    <dbReference type="NCBI Taxonomy" id="59922"/>
    <lineage>
        <taxon>Bacteria</taxon>
        <taxon>Bacillati</taxon>
        <taxon>Cyanobacteriota</taxon>
        <taxon>Cyanophyceae</taxon>
        <taxon>Synechococcales</taxon>
        <taxon>Prochlorococcaceae</taxon>
        <taxon>Prochlorococcus</taxon>
    </lineage>
</organism>
<accession>A2CC41</accession>
<keyword id="KW-0687">Ribonucleoprotein</keyword>
<keyword id="KW-0689">Ribosomal protein</keyword>
<keyword id="KW-0694">RNA-binding</keyword>
<keyword id="KW-0699">rRNA-binding</keyword>
<proteinExistence type="inferred from homology"/>
<evidence type="ECO:0000255" key="1">
    <source>
        <dbReference type="HAMAP-Rule" id="MF_01302"/>
    </source>
</evidence>
<evidence type="ECO:0000305" key="2"/>
<dbReference type="EMBL" id="CP000554">
    <property type="protein sequence ID" value="ABM79051.1"/>
    <property type="molecule type" value="Genomic_DNA"/>
</dbReference>
<dbReference type="RefSeq" id="WP_011826917.1">
    <property type="nucleotide sequence ID" value="NC_008820.1"/>
</dbReference>
<dbReference type="SMR" id="A2CC41"/>
<dbReference type="STRING" id="59922.P9303_23161"/>
<dbReference type="KEGG" id="pmf:P9303_23161"/>
<dbReference type="HOGENOM" id="CLU_098428_0_2_3"/>
<dbReference type="BioCyc" id="PMAR59922:G1G80-2032-MONOMER"/>
<dbReference type="Proteomes" id="UP000002274">
    <property type="component" value="Chromosome"/>
</dbReference>
<dbReference type="GO" id="GO:1990904">
    <property type="term" value="C:ribonucleoprotein complex"/>
    <property type="evidence" value="ECO:0007669"/>
    <property type="project" value="UniProtKB-KW"/>
</dbReference>
<dbReference type="GO" id="GO:0005840">
    <property type="term" value="C:ribosome"/>
    <property type="evidence" value="ECO:0007669"/>
    <property type="project" value="UniProtKB-KW"/>
</dbReference>
<dbReference type="GO" id="GO:0019843">
    <property type="term" value="F:rRNA binding"/>
    <property type="evidence" value="ECO:0007669"/>
    <property type="project" value="UniProtKB-UniRule"/>
</dbReference>
<dbReference type="GO" id="GO:0003735">
    <property type="term" value="F:structural constituent of ribosome"/>
    <property type="evidence" value="ECO:0007669"/>
    <property type="project" value="InterPro"/>
</dbReference>
<dbReference type="GO" id="GO:0006412">
    <property type="term" value="P:translation"/>
    <property type="evidence" value="ECO:0007669"/>
    <property type="project" value="UniProtKB-UniRule"/>
</dbReference>
<dbReference type="FunFam" id="3.30.1370.30:FF:000002">
    <property type="entry name" value="30S ribosomal protein S8"/>
    <property type="match status" value="1"/>
</dbReference>
<dbReference type="FunFam" id="3.30.1490.10:FF:000001">
    <property type="entry name" value="30S ribosomal protein S8"/>
    <property type="match status" value="1"/>
</dbReference>
<dbReference type="Gene3D" id="3.30.1370.30">
    <property type="match status" value="1"/>
</dbReference>
<dbReference type="Gene3D" id="3.30.1490.10">
    <property type="match status" value="1"/>
</dbReference>
<dbReference type="HAMAP" id="MF_01302_B">
    <property type="entry name" value="Ribosomal_uS8_B"/>
    <property type="match status" value="1"/>
</dbReference>
<dbReference type="InterPro" id="IPR000630">
    <property type="entry name" value="Ribosomal_uS8"/>
</dbReference>
<dbReference type="InterPro" id="IPR047863">
    <property type="entry name" value="Ribosomal_uS8_CS"/>
</dbReference>
<dbReference type="InterPro" id="IPR035987">
    <property type="entry name" value="Ribosomal_uS8_sf"/>
</dbReference>
<dbReference type="NCBIfam" id="NF001109">
    <property type="entry name" value="PRK00136.1"/>
    <property type="match status" value="1"/>
</dbReference>
<dbReference type="PANTHER" id="PTHR11758">
    <property type="entry name" value="40S RIBOSOMAL PROTEIN S15A"/>
    <property type="match status" value="1"/>
</dbReference>
<dbReference type="Pfam" id="PF00410">
    <property type="entry name" value="Ribosomal_S8"/>
    <property type="match status" value="1"/>
</dbReference>
<dbReference type="SUPFAM" id="SSF56047">
    <property type="entry name" value="Ribosomal protein S8"/>
    <property type="match status" value="1"/>
</dbReference>
<dbReference type="PROSITE" id="PS00053">
    <property type="entry name" value="RIBOSOMAL_S8"/>
    <property type="match status" value="1"/>
</dbReference>
<reference key="1">
    <citation type="journal article" date="2007" name="PLoS Genet.">
        <title>Patterns and implications of gene gain and loss in the evolution of Prochlorococcus.</title>
        <authorList>
            <person name="Kettler G.C."/>
            <person name="Martiny A.C."/>
            <person name="Huang K."/>
            <person name="Zucker J."/>
            <person name="Coleman M.L."/>
            <person name="Rodrigue S."/>
            <person name="Chen F."/>
            <person name="Lapidus A."/>
            <person name="Ferriera S."/>
            <person name="Johnson J."/>
            <person name="Steglich C."/>
            <person name="Church G.M."/>
            <person name="Richardson P."/>
            <person name="Chisholm S.W."/>
        </authorList>
    </citation>
    <scope>NUCLEOTIDE SEQUENCE [LARGE SCALE GENOMIC DNA]</scope>
    <source>
        <strain>MIT 9303</strain>
    </source>
</reference>
<feature type="chain" id="PRO_0000290900" description="Small ribosomal subunit protein uS8">
    <location>
        <begin position="1"/>
        <end position="133"/>
    </location>
</feature>